<keyword id="KW-0002">3D-structure</keyword>
<keyword id="KW-0010">Activator</keyword>
<keyword id="KW-0238">DNA-binding</keyword>
<keyword id="KW-1185">Reference proteome</keyword>
<keyword id="KW-0678">Repressor</keyword>
<keyword id="KW-0804">Transcription</keyword>
<keyword id="KW-0805">Transcription regulation</keyword>
<reference key="1">
    <citation type="journal article" date="1994" name="Nucleic Acids Res.">
        <title>Analysis of the Escherichia coli genome. V. DNA sequence of the region from 76.0 to 81.5 minutes.</title>
        <authorList>
            <person name="Sofia H.J."/>
            <person name="Burland V."/>
            <person name="Daniels D.L."/>
            <person name="Plunkett G. III"/>
            <person name="Blattner F.R."/>
        </authorList>
    </citation>
    <scope>NUCLEOTIDE SEQUENCE [LARGE SCALE GENOMIC DNA]</scope>
    <source>
        <strain>K12 / MG1655 / ATCC 47076</strain>
    </source>
</reference>
<reference key="2">
    <citation type="journal article" date="1997" name="Science">
        <title>The complete genome sequence of Escherichia coli K-12.</title>
        <authorList>
            <person name="Blattner F.R."/>
            <person name="Plunkett G. III"/>
            <person name="Bloch C.A."/>
            <person name="Perna N.T."/>
            <person name="Burland V."/>
            <person name="Riley M."/>
            <person name="Collado-Vides J."/>
            <person name="Glasner J.D."/>
            <person name="Rode C.K."/>
            <person name="Mayhew G.F."/>
            <person name="Gregor J."/>
            <person name="Davis N.W."/>
            <person name="Kirkpatrick H.A."/>
            <person name="Goeden M.A."/>
            <person name="Rose D.J."/>
            <person name="Mau B."/>
            <person name="Shao Y."/>
        </authorList>
    </citation>
    <scope>NUCLEOTIDE SEQUENCE [LARGE SCALE GENOMIC DNA]</scope>
    <source>
        <strain>K12 / MG1655 / ATCC 47076</strain>
    </source>
</reference>
<reference key="3">
    <citation type="journal article" date="2006" name="Mol. Syst. Biol.">
        <title>Highly accurate genome sequences of Escherichia coli K-12 strains MG1655 and W3110.</title>
        <authorList>
            <person name="Hayashi K."/>
            <person name="Morooka N."/>
            <person name="Yamamoto Y."/>
            <person name="Fujita K."/>
            <person name="Isono K."/>
            <person name="Choi S."/>
            <person name="Ohtsubo E."/>
            <person name="Baba T."/>
            <person name="Wanner B.L."/>
            <person name="Mori H."/>
            <person name="Horiuchi T."/>
        </authorList>
    </citation>
    <scope>NUCLEOTIDE SEQUENCE [LARGE SCALE GENOMIC DNA]</scope>
    <source>
        <strain>K12 / W3110 / ATCC 27325 / DSM 5911</strain>
    </source>
</reference>
<reference key="4">
    <citation type="journal article" date="2001" name="Mol. Microbiol.">
        <title>Large-scale monitoring of pleiotropic regulation of gene expression by the prokaryotic nucleoid-associated protein, H-NS.</title>
        <authorList>
            <person name="Hommais F."/>
            <person name="Krin E."/>
            <person name="Laurent-Winter C."/>
            <person name="Soutourina O."/>
            <person name="Malpertuy A."/>
            <person name="Le Caer J.-P."/>
            <person name="Danchin A."/>
            <person name="Bertin P."/>
        </authorList>
    </citation>
    <scope>FUNCTION</scope>
    <scope>GENE NAME</scope>
    <source>
        <strain>FB8</strain>
        <strain>K12 / MG1655 / ATCC 47076</strain>
    </source>
</reference>
<reference key="5">
    <citation type="journal article" date="2002" name="J. Bacteriol.">
        <title>Functional characterization and regulation of gadX, a gene encoding an AraC/XylS-like transcriptional activator of the Escherichia coli glutamic acid decarboxylase system.</title>
        <authorList>
            <person name="Tramonti A."/>
            <person name="Visca P."/>
            <person name="De Canio M."/>
            <person name="Falconi M."/>
            <person name="De Biase D."/>
        </authorList>
    </citation>
    <scope>FUNCTION</scope>
    <scope>INDUCTION</scope>
    <source>
        <strain>ATCC 11246</strain>
    </source>
</reference>
<reference key="6">
    <citation type="journal article" date="2002" name="J. Bacteriol.">
        <title>Collaborative regulation of Escherichia coli glutamate-dependent acid resistance by two AraC-like regulators, GadX and GadW (YhiW).</title>
        <authorList>
            <person name="Ma Z."/>
            <person name="Richard H."/>
            <person name="Tucker D.L."/>
            <person name="Conway T."/>
            <person name="Foster J.W."/>
        </authorList>
    </citation>
    <scope>FUNCTION</scope>
    <scope>INDUCTION</scope>
    <scope>SUBUNIT</scope>
    <source>
        <strain>K12</strain>
    </source>
</reference>
<reference key="7">
    <citation type="journal article" date="2003" name="J. Bacteriol.">
        <title>Genes of the GadX-GadW regulon in Escherichia coli.</title>
        <authorList>
            <person name="Tucker D.L."/>
            <person name="Tucker N."/>
            <person name="Ma Z."/>
            <person name="Foster J.W."/>
            <person name="Miranda R.L."/>
            <person name="Cohen P.S."/>
            <person name="Conway T."/>
        </authorList>
    </citation>
    <scope>FUNCTION</scope>
    <scope>INDUCTION</scope>
    <source>
        <strain>K12</strain>
    </source>
</reference>
<reference key="8">
    <citation type="journal article" date="2003" name="J. Bacteriol.">
        <title>pH-dependent modulation of cyclic AMP levels and GadW-dependent repression of RpoS affect synthesis of the GadX regulator and Escherichia coli acid resistance.</title>
        <authorList>
            <person name="Ma Z."/>
            <person name="Richard H."/>
            <person name="Foster J.W."/>
        </authorList>
    </citation>
    <scope>FUNCTION</scope>
</reference>
<reference key="9">
    <citation type="journal article" date="2004" name="Microbiology">
        <title>GadE (YhiE): a novel activator involved in the response to acid environment in Escherichia coli.</title>
        <authorList>
            <person name="Hommais F."/>
            <person name="Krin E."/>
            <person name="Coppee J.-Y."/>
            <person name="Lacroix C."/>
            <person name="Yeramian E."/>
            <person name="Danchin A."/>
            <person name="Bertin P."/>
        </authorList>
    </citation>
    <scope>FUNCTION</scope>
    <source>
        <strain>FB8</strain>
    </source>
</reference>
<comment type="function">
    <text evidence="2 3 4 5 6 7">Positively regulates the expression of about fifteen genes involved in acid resistance such as gadA, gadB and gadC. Depending on the conditions (growth phase and medium), can repress gadW.</text>
</comment>
<comment type="subunit">
    <text evidence="4">Homodimer.</text>
</comment>
<comment type="induction">
    <text evidence="3 4 5">Expression can be activated by RpoS and repressed by CRP, H-NS and GadW, depending on the conditions.</text>
</comment>
<comment type="miscellaneous">
    <text>GadX and GadW are part of a complex system required for acid resistance via the regulation of gadA and gadBC. Many of the described circuits use mutants missing one of the network components. In the wild-type situation, however, many of the scenarios are not easily observed.</text>
</comment>
<gene>
    <name type="primary">gadX</name>
    <name type="synonym">yhiX</name>
    <name type="ordered locus">b3516</name>
    <name type="ordered locus">JW3484</name>
</gene>
<feature type="chain" id="PRO_0000194518" description="HTH-type transcriptional regulator GadX">
    <location>
        <begin position="1"/>
        <end position="274"/>
    </location>
</feature>
<feature type="domain" description="HTH araC/xylS-type" evidence="1">
    <location>
        <begin position="145"/>
        <end position="242"/>
    </location>
</feature>
<feature type="DNA-binding region" description="H-T-H motif" evidence="1">
    <location>
        <begin position="162"/>
        <end position="183"/>
    </location>
</feature>
<feature type="DNA-binding region" description="H-T-H motif" evidence="1">
    <location>
        <begin position="209"/>
        <end position="232"/>
    </location>
</feature>
<feature type="helix" evidence="8">
    <location>
        <begin position="143"/>
        <end position="152"/>
    </location>
</feature>
<feature type="helix" evidence="8">
    <location>
        <begin position="161"/>
        <end position="167"/>
    </location>
</feature>
<feature type="helix" evidence="8">
    <location>
        <begin position="172"/>
        <end position="181"/>
    </location>
</feature>
<feature type="helix" evidence="8">
    <location>
        <begin position="186"/>
        <end position="202"/>
    </location>
</feature>
<feature type="helix" evidence="8">
    <location>
        <begin position="209"/>
        <end position="215"/>
    </location>
</feature>
<feature type="helix" evidence="8">
    <location>
        <begin position="221"/>
        <end position="232"/>
    </location>
</feature>
<feature type="helix" evidence="8">
    <location>
        <begin position="236"/>
        <end position="242"/>
    </location>
</feature>
<protein>
    <recommendedName>
        <fullName>HTH-type transcriptional regulator GadX</fullName>
    </recommendedName>
</protein>
<evidence type="ECO:0000255" key="1">
    <source>
        <dbReference type="PROSITE-ProRule" id="PRU00593"/>
    </source>
</evidence>
<evidence type="ECO:0000269" key="2">
    <source>
    </source>
</evidence>
<evidence type="ECO:0000269" key="3">
    <source>
    </source>
</evidence>
<evidence type="ECO:0000269" key="4">
    <source>
    </source>
</evidence>
<evidence type="ECO:0000269" key="5">
    <source>
    </source>
</evidence>
<evidence type="ECO:0000269" key="6">
    <source>
    </source>
</evidence>
<evidence type="ECO:0000269" key="7">
    <source>
    </source>
</evidence>
<evidence type="ECO:0007829" key="8">
    <source>
        <dbReference type="PDB" id="3MKL"/>
    </source>
</evidence>
<name>GADX_ECOLI</name>
<accession>P37639</accession>
<accession>Q2M7H8</accession>
<proteinExistence type="evidence at protein level"/>
<sequence>MQSLHGNCLIAYARHKYILTMVNGEYRYFNGGDLVFADASQIRVDKCVENFVFVSRDTLSLFLPMLKEEALNLHAHKKVSSLLVHHCSRDIPVFQEVAQLSQNKNLRYAEMLRKRALIFALLSVFLEDEHFIPLLLNVLQPNMRTRVCTVINNNIAHEWTLARIASELLMSPSLLKKKLREEETSYSQLLTECRMQRALQLIVIHGFSIKRVAVSCGYHSVSYFIYVFRNYYGMTPTEYQERSAQRLSNRDSAASIVAQGNFYGTDRSAEGIRL</sequence>
<organism>
    <name type="scientific">Escherichia coli (strain K12)</name>
    <dbReference type="NCBI Taxonomy" id="83333"/>
    <lineage>
        <taxon>Bacteria</taxon>
        <taxon>Pseudomonadati</taxon>
        <taxon>Pseudomonadota</taxon>
        <taxon>Gammaproteobacteria</taxon>
        <taxon>Enterobacterales</taxon>
        <taxon>Enterobacteriaceae</taxon>
        <taxon>Escherichia</taxon>
    </lineage>
</organism>
<dbReference type="EMBL" id="U00039">
    <property type="protein sequence ID" value="AAB18492.1"/>
    <property type="molecule type" value="Genomic_DNA"/>
</dbReference>
<dbReference type="EMBL" id="U00096">
    <property type="protein sequence ID" value="AAC76541.1"/>
    <property type="molecule type" value="Genomic_DNA"/>
</dbReference>
<dbReference type="EMBL" id="AP009048">
    <property type="protein sequence ID" value="BAE77778.1"/>
    <property type="molecule type" value="Genomic_DNA"/>
</dbReference>
<dbReference type="PIR" id="S47736">
    <property type="entry name" value="S47736"/>
</dbReference>
<dbReference type="RefSeq" id="NP_417973.1">
    <property type="nucleotide sequence ID" value="NC_000913.3"/>
</dbReference>
<dbReference type="RefSeq" id="WP_001191059.1">
    <property type="nucleotide sequence ID" value="NZ_SSZK01000042.1"/>
</dbReference>
<dbReference type="PDB" id="3MKL">
    <property type="method" value="X-ray"/>
    <property type="resolution" value="2.15 A"/>
    <property type="chains" value="A/B=137-255"/>
</dbReference>
<dbReference type="PDBsum" id="3MKL"/>
<dbReference type="SMR" id="P37639"/>
<dbReference type="BioGRID" id="4262524">
    <property type="interactions" value="93"/>
</dbReference>
<dbReference type="FunCoup" id="P37639">
    <property type="interactions" value="95"/>
</dbReference>
<dbReference type="IntAct" id="P37639">
    <property type="interactions" value="6"/>
</dbReference>
<dbReference type="STRING" id="511145.b3516"/>
<dbReference type="CARD" id="ARO:3000508">
    <property type="molecule name" value="gadX"/>
    <property type="mechanism identifier" value="ARO:0010000"/>
    <property type="mechanism name" value="antibiotic efflux"/>
</dbReference>
<dbReference type="jPOST" id="P37639"/>
<dbReference type="PaxDb" id="511145-b3516"/>
<dbReference type="EnsemblBacteria" id="AAC76541">
    <property type="protein sequence ID" value="AAC76541"/>
    <property type="gene ID" value="b3516"/>
</dbReference>
<dbReference type="GeneID" id="948028"/>
<dbReference type="KEGG" id="ecj:JW3484"/>
<dbReference type="KEGG" id="eco:b3516"/>
<dbReference type="KEGG" id="ecoc:C3026_19050"/>
<dbReference type="PATRIC" id="fig|1411691.4.peg.3202"/>
<dbReference type="EchoBASE" id="EB2154"/>
<dbReference type="eggNOG" id="COG2207">
    <property type="taxonomic scope" value="Bacteria"/>
</dbReference>
<dbReference type="HOGENOM" id="CLU_091292_0_0_6"/>
<dbReference type="InParanoid" id="P37639"/>
<dbReference type="OMA" id="NIANDWS"/>
<dbReference type="OrthoDB" id="1050625at2"/>
<dbReference type="PhylomeDB" id="P37639"/>
<dbReference type="BioCyc" id="EcoCyc:EG12243-MONOMER"/>
<dbReference type="EvolutionaryTrace" id="P37639"/>
<dbReference type="PRO" id="PR:P37639"/>
<dbReference type="Proteomes" id="UP000000625">
    <property type="component" value="Chromosome"/>
</dbReference>
<dbReference type="GO" id="GO:0000987">
    <property type="term" value="F:cis-regulatory region sequence-specific DNA binding"/>
    <property type="evidence" value="ECO:0000314"/>
    <property type="project" value="EcoCyc"/>
</dbReference>
<dbReference type="GO" id="GO:0001216">
    <property type="term" value="F:DNA-binding transcription activator activity"/>
    <property type="evidence" value="ECO:0000315"/>
    <property type="project" value="EcoCyc"/>
</dbReference>
<dbReference type="GO" id="GO:0003700">
    <property type="term" value="F:DNA-binding transcription factor activity"/>
    <property type="evidence" value="ECO:0000318"/>
    <property type="project" value="GO_Central"/>
</dbReference>
<dbReference type="GO" id="GO:0042803">
    <property type="term" value="F:protein homodimerization activity"/>
    <property type="evidence" value="ECO:0000314"/>
    <property type="project" value="EcoCyc"/>
</dbReference>
<dbReference type="GO" id="GO:0000976">
    <property type="term" value="F:transcription cis-regulatory region binding"/>
    <property type="evidence" value="ECO:0000318"/>
    <property type="project" value="GO_Central"/>
</dbReference>
<dbReference type="GO" id="GO:0006974">
    <property type="term" value="P:DNA damage response"/>
    <property type="evidence" value="ECO:0000270"/>
    <property type="project" value="EcoliWiki"/>
</dbReference>
<dbReference type="GO" id="GO:0006351">
    <property type="term" value="P:DNA-templated transcription"/>
    <property type="evidence" value="ECO:0000314"/>
    <property type="project" value="EcoCyc"/>
</dbReference>
<dbReference type="GO" id="GO:0045893">
    <property type="term" value="P:positive regulation of DNA-templated transcription"/>
    <property type="evidence" value="ECO:0000315"/>
    <property type="project" value="EcoCyc"/>
</dbReference>
<dbReference type="FunFam" id="1.10.10.60:FF:000267">
    <property type="entry name" value="HTH-type transcriptional regulator GadX"/>
    <property type="match status" value="1"/>
</dbReference>
<dbReference type="Gene3D" id="1.10.10.60">
    <property type="entry name" value="Homeodomain-like"/>
    <property type="match status" value="1"/>
</dbReference>
<dbReference type="InterPro" id="IPR009057">
    <property type="entry name" value="Homeodomain-like_sf"/>
</dbReference>
<dbReference type="InterPro" id="IPR018060">
    <property type="entry name" value="HTH_AraC"/>
</dbReference>
<dbReference type="InterPro" id="IPR018062">
    <property type="entry name" value="HTH_AraC-typ_CS"/>
</dbReference>
<dbReference type="InterPro" id="IPR020449">
    <property type="entry name" value="Tscrpt_reg_AraC-type_HTH"/>
</dbReference>
<dbReference type="NCBIfam" id="NF007432">
    <property type="entry name" value="PRK09978.1"/>
    <property type="match status" value="1"/>
</dbReference>
<dbReference type="PANTHER" id="PTHR47894">
    <property type="entry name" value="HTH-TYPE TRANSCRIPTIONAL REGULATOR GADX"/>
    <property type="match status" value="1"/>
</dbReference>
<dbReference type="PANTHER" id="PTHR47894:SF4">
    <property type="entry name" value="HTH-TYPE TRANSCRIPTIONAL REGULATOR GADX"/>
    <property type="match status" value="1"/>
</dbReference>
<dbReference type="Pfam" id="PF12833">
    <property type="entry name" value="HTH_18"/>
    <property type="match status" value="1"/>
</dbReference>
<dbReference type="PRINTS" id="PR00032">
    <property type="entry name" value="HTHARAC"/>
</dbReference>
<dbReference type="SMART" id="SM00342">
    <property type="entry name" value="HTH_ARAC"/>
    <property type="match status" value="1"/>
</dbReference>
<dbReference type="SUPFAM" id="SSF46689">
    <property type="entry name" value="Homeodomain-like"/>
    <property type="match status" value="1"/>
</dbReference>
<dbReference type="PROSITE" id="PS00041">
    <property type="entry name" value="HTH_ARAC_FAMILY_1"/>
    <property type="match status" value="1"/>
</dbReference>
<dbReference type="PROSITE" id="PS01124">
    <property type="entry name" value="HTH_ARAC_FAMILY_2"/>
    <property type="match status" value="1"/>
</dbReference>